<reference key="1">
    <citation type="journal article" date="2007" name="BMC Microbiol.">
        <title>Subtle genetic changes enhance virulence of methicillin resistant and sensitive Staphylococcus aureus.</title>
        <authorList>
            <person name="Highlander S.K."/>
            <person name="Hulten K.G."/>
            <person name="Qin X."/>
            <person name="Jiang H."/>
            <person name="Yerrapragada S."/>
            <person name="Mason E.O. Jr."/>
            <person name="Shang Y."/>
            <person name="Williams T.M."/>
            <person name="Fortunov R.M."/>
            <person name="Liu Y."/>
            <person name="Igboeli O."/>
            <person name="Petrosino J."/>
            <person name="Tirumalai M."/>
            <person name="Uzman A."/>
            <person name="Fox G.E."/>
            <person name="Cardenas A.M."/>
            <person name="Muzny D.M."/>
            <person name="Hemphill L."/>
            <person name="Ding Y."/>
            <person name="Dugan S."/>
            <person name="Blyth P.R."/>
            <person name="Buhay C.J."/>
            <person name="Dinh H.H."/>
            <person name="Hawes A.C."/>
            <person name="Holder M."/>
            <person name="Kovar C.L."/>
            <person name="Lee S.L."/>
            <person name="Liu W."/>
            <person name="Nazareth L.V."/>
            <person name="Wang Q."/>
            <person name="Zhou J."/>
            <person name="Kaplan S.L."/>
            <person name="Weinstock G.M."/>
        </authorList>
    </citation>
    <scope>NUCLEOTIDE SEQUENCE [LARGE SCALE GENOMIC DNA]</scope>
    <source>
        <strain>USA300 / TCH1516</strain>
    </source>
</reference>
<dbReference type="EC" id="2.1.2.9" evidence="1"/>
<dbReference type="EMBL" id="CP000730">
    <property type="protein sequence ID" value="ABX29168.1"/>
    <property type="molecule type" value="Genomic_DNA"/>
</dbReference>
<dbReference type="RefSeq" id="WP_000161299.1">
    <property type="nucleotide sequence ID" value="NC_010079.1"/>
</dbReference>
<dbReference type="SMR" id="A8Z3Q2"/>
<dbReference type="KEGG" id="sax:USA300HOU_1153"/>
<dbReference type="HOGENOM" id="CLU_033347_1_1_9"/>
<dbReference type="GO" id="GO:0005829">
    <property type="term" value="C:cytosol"/>
    <property type="evidence" value="ECO:0007669"/>
    <property type="project" value="TreeGrafter"/>
</dbReference>
<dbReference type="GO" id="GO:0004479">
    <property type="term" value="F:methionyl-tRNA formyltransferase activity"/>
    <property type="evidence" value="ECO:0007669"/>
    <property type="project" value="UniProtKB-UniRule"/>
</dbReference>
<dbReference type="CDD" id="cd08646">
    <property type="entry name" value="FMT_core_Met-tRNA-FMT_N"/>
    <property type="match status" value="1"/>
</dbReference>
<dbReference type="CDD" id="cd08704">
    <property type="entry name" value="Met_tRNA_FMT_C"/>
    <property type="match status" value="1"/>
</dbReference>
<dbReference type="FunFam" id="3.40.50.170:FF:000004">
    <property type="entry name" value="Methionyl-tRNA formyltransferase"/>
    <property type="match status" value="1"/>
</dbReference>
<dbReference type="Gene3D" id="3.10.25.10">
    <property type="entry name" value="Formyl transferase, C-terminal domain"/>
    <property type="match status" value="1"/>
</dbReference>
<dbReference type="Gene3D" id="3.40.50.170">
    <property type="entry name" value="Formyl transferase, N-terminal domain"/>
    <property type="match status" value="1"/>
</dbReference>
<dbReference type="HAMAP" id="MF_00182">
    <property type="entry name" value="Formyl_trans"/>
    <property type="match status" value="1"/>
</dbReference>
<dbReference type="InterPro" id="IPR005794">
    <property type="entry name" value="Fmt"/>
</dbReference>
<dbReference type="InterPro" id="IPR005793">
    <property type="entry name" value="Formyl_trans_C"/>
</dbReference>
<dbReference type="InterPro" id="IPR037022">
    <property type="entry name" value="Formyl_trans_C_sf"/>
</dbReference>
<dbReference type="InterPro" id="IPR002376">
    <property type="entry name" value="Formyl_transf_N"/>
</dbReference>
<dbReference type="InterPro" id="IPR036477">
    <property type="entry name" value="Formyl_transf_N_sf"/>
</dbReference>
<dbReference type="InterPro" id="IPR011034">
    <property type="entry name" value="Formyl_transferase-like_C_sf"/>
</dbReference>
<dbReference type="InterPro" id="IPR001555">
    <property type="entry name" value="GART_AS"/>
</dbReference>
<dbReference type="InterPro" id="IPR044135">
    <property type="entry name" value="Met-tRNA-FMT_C"/>
</dbReference>
<dbReference type="InterPro" id="IPR041711">
    <property type="entry name" value="Met-tRNA-FMT_N"/>
</dbReference>
<dbReference type="NCBIfam" id="TIGR00460">
    <property type="entry name" value="fmt"/>
    <property type="match status" value="1"/>
</dbReference>
<dbReference type="PANTHER" id="PTHR11138">
    <property type="entry name" value="METHIONYL-TRNA FORMYLTRANSFERASE"/>
    <property type="match status" value="1"/>
</dbReference>
<dbReference type="PANTHER" id="PTHR11138:SF5">
    <property type="entry name" value="METHIONYL-TRNA FORMYLTRANSFERASE, MITOCHONDRIAL"/>
    <property type="match status" value="1"/>
</dbReference>
<dbReference type="Pfam" id="PF02911">
    <property type="entry name" value="Formyl_trans_C"/>
    <property type="match status" value="1"/>
</dbReference>
<dbReference type="Pfam" id="PF00551">
    <property type="entry name" value="Formyl_trans_N"/>
    <property type="match status" value="1"/>
</dbReference>
<dbReference type="SUPFAM" id="SSF50486">
    <property type="entry name" value="FMT C-terminal domain-like"/>
    <property type="match status" value="1"/>
</dbReference>
<dbReference type="SUPFAM" id="SSF53328">
    <property type="entry name" value="Formyltransferase"/>
    <property type="match status" value="1"/>
</dbReference>
<dbReference type="PROSITE" id="PS00373">
    <property type="entry name" value="GART"/>
    <property type="match status" value="1"/>
</dbReference>
<evidence type="ECO:0000255" key="1">
    <source>
        <dbReference type="HAMAP-Rule" id="MF_00182"/>
    </source>
</evidence>
<gene>
    <name evidence="1" type="primary">fmt</name>
    <name type="ordered locus">USA300HOU_1153</name>
</gene>
<organism>
    <name type="scientific">Staphylococcus aureus (strain USA300 / TCH1516)</name>
    <dbReference type="NCBI Taxonomy" id="451516"/>
    <lineage>
        <taxon>Bacteria</taxon>
        <taxon>Bacillati</taxon>
        <taxon>Bacillota</taxon>
        <taxon>Bacilli</taxon>
        <taxon>Bacillales</taxon>
        <taxon>Staphylococcaceae</taxon>
        <taxon>Staphylococcus</taxon>
    </lineage>
</organism>
<proteinExistence type="inferred from homology"/>
<sequence length="311" mass="34211">MTKIIFMGTPDFSTTVLEMLIAEHDVIAVVTQPDRPVGRKRVMTPPPVKKVAMKYDLPVYQPEKLSGSEELEQLLQLDVDLIVTAAFGQLLPESLLALPNLGAINVHASLLPKYRGGAPIHQAIIDGEQETGITIMYMVKKLDAGNIISQQAIKIEENDNVGTMHDKLSVLGADLLKETLPSIIEGTNESVPQDDTQATFASNIRREDERISWNKPGRQVFNQIRGLSPWPVAYTTMDDTNLKIYDAELVETNKINEPGTIIETTKKAIIVATNDNEAVAIKDMQLAGKKRMLAANYLSGAQNTLVGKKLI</sequence>
<name>FMT_STAAT</name>
<keyword id="KW-0648">Protein biosynthesis</keyword>
<keyword id="KW-0808">Transferase</keyword>
<comment type="function">
    <text evidence="1">Attaches a formyl group to the free amino group of methionyl-tRNA(fMet). The formyl group appears to play a dual role in the initiator identity of N-formylmethionyl-tRNA by promoting its recognition by IF2 and preventing the misappropriation of this tRNA by the elongation apparatus.</text>
</comment>
<comment type="catalytic activity">
    <reaction evidence="1">
        <text>L-methionyl-tRNA(fMet) + (6R)-10-formyltetrahydrofolate = N-formyl-L-methionyl-tRNA(fMet) + (6S)-5,6,7,8-tetrahydrofolate + H(+)</text>
        <dbReference type="Rhea" id="RHEA:24380"/>
        <dbReference type="Rhea" id="RHEA-COMP:9952"/>
        <dbReference type="Rhea" id="RHEA-COMP:9953"/>
        <dbReference type="ChEBI" id="CHEBI:15378"/>
        <dbReference type="ChEBI" id="CHEBI:57453"/>
        <dbReference type="ChEBI" id="CHEBI:78530"/>
        <dbReference type="ChEBI" id="CHEBI:78844"/>
        <dbReference type="ChEBI" id="CHEBI:195366"/>
        <dbReference type="EC" id="2.1.2.9"/>
    </reaction>
</comment>
<comment type="similarity">
    <text evidence="1">Belongs to the Fmt family.</text>
</comment>
<accession>A8Z3Q2</accession>
<protein>
    <recommendedName>
        <fullName evidence="1">Methionyl-tRNA formyltransferase</fullName>
        <ecNumber evidence="1">2.1.2.9</ecNumber>
    </recommendedName>
</protein>
<feature type="chain" id="PRO_1000077327" description="Methionyl-tRNA formyltransferase">
    <location>
        <begin position="1"/>
        <end position="311"/>
    </location>
</feature>
<feature type="binding site" evidence="1">
    <location>
        <begin position="109"/>
        <end position="112"/>
    </location>
    <ligand>
        <name>(6S)-5,6,7,8-tetrahydrofolate</name>
        <dbReference type="ChEBI" id="CHEBI:57453"/>
    </ligand>
</feature>